<sequence>MTQQPLRGVTSLRFNQDQSCFCCAMETGVRIYNVEPLMEKGHLDHEQVGSMGLVEMLHRSNLLALVGGGSSPKFSEISVLIWDDAREGKDSKEKLVLEFTFTKPVLSVRMRHDKIVIVLKNRIYVYSFPDNPRKLFEFDTRDNPKGLCDLCPSLEKQLLVFPGHKCGSLQLVDLASTKPGTSSAPFTINAHQSDIACVSLNQPGTVVASASQKGTLIRLFDTQSKEKLVELRRGTDPATLYCINFSHDSSFLCASSDKGTVHIFALKDTRLNRRSALARVGKVGPMIGQYVDSQWSLASFTVPAESACICAFGRNTSKNVNSVIAICVDGTFHKYVFTPDGNCNREAFDVYLDICDDDDF</sequence>
<proteinExistence type="evidence at protein level"/>
<name>WIPI4_HUMAN</name>
<protein>
    <recommendedName>
        <fullName>WD repeat domain phosphoinositide-interacting protein 4</fullName>
        <shortName>WIPI-4</shortName>
    </recommendedName>
    <alternativeName>
        <fullName>WD repeat-containing protein 45</fullName>
    </alternativeName>
</protein>
<evidence type="ECO:0000250" key="1">
    <source>
        <dbReference type="UniProtKB" id="Q9Y4P8"/>
    </source>
</evidence>
<evidence type="ECO:0000269" key="2">
    <source>
    </source>
</evidence>
<evidence type="ECO:0000269" key="3">
    <source>
    </source>
</evidence>
<evidence type="ECO:0000269" key="4">
    <source>
    </source>
</evidence>
<evidence type="ECO:0000269" key="5">
    <source>
    </source>
</evidence>
<evidence type="ECO:0000269" key="6">
    <source>
    </source>
</evidence>
<evidence type="ECO:0000269" key="7">
    <source>
    </source>
</evidence>
<evidence type="ECO:0000269" key="8">
    <source>
    </source>
</evidence>
<evidence type="ECO:0000269" key="9">
    <source>
    </source>
</evidence>
<evidence type="ECO:0000269" key="10">
    <source>
    </source>
</evidence>
<evidence type="ECO:0000303" key="11">
    <source>
    </source>
</evidence>
<evidence type="ECO:0000305" key="12"/>
<evidence type="ECO:0007829" key="13">
    <source>
        <dbReference type="PDB" id="8KBX"/>
    </source>
</evidence>
<keyword id="KW-0002">3D-structure</keyword>
<keyword id="KW-0025">Alternative splicing</keyword>
<keyword id="KW-0072">Autophagy</keyword>
<keyword id="KW-0963">Cytoplasm</keyword>
<keyword id="KW-0225">Disease variant</keyword>
<keyword id="KW-0446">Lipid-binding</keyword>
<keyword id="KW-0523">Neurodegeneration</keyword>
<keyword id="KW-1267">Proteomics identification</keyword>
<keyword id="KW-1185">Reference proteome</keyword>
<keyword id="KW-0677">Repeat</keyword>
<keyword id="KW-0853">WD repeat</keyword>
<organism>
    <name type="scientific">Homo sapiens</name>
    <name type="common">Human</name>
    <dbReference type="NCBI Taxonomy" id="9606"/>
    <lineage>
        <taxon>Eukaryota</taxon>
        <taxon>Metazoa</taxon>
        <taxon>Chordata</taxon>
        <taxon>Craniata</taxon>
        <taxon>Vertebrata</taxon>
        <taxon>Euteleostomi</taxon>
        <taxon>Mammalia</taxon>
        <taxon>Eutheria</taxon>
        <taxon>Euarchontoglires</taxon>
        <taxon>Primates</taxon>
        <taxon>Haplorrhini</taxon>
        <taxon>Catarrhini</taxon>
        <taxon>Hominidae</taxon>
        <taxon>Homo</taxon>
    </lineage>
</organism>
<gene>
    <name type="primary">WDR45</name>
    <name type="synonym">WDRX1</name>
    <name type="synonym">WDRXI4</name>
    <name type="synonym">WIPI4</name>
    <name type="ORF">JM5</name>
</gene>
<comment type="function">
    <text evidence="4 7 9">Component of the autophagy machinery that controls the major intracellular degradation process by which cytoplasmic materials are packaged into autophagosomes and delivered to lysosomes for degradation (PubMed:23435086, PubMed:28561066). Binds phosphatidylinositol 3-phosphate (PtdIns3P) (PubMed:28561066). Activated by the STK11/AMPK signaling pathway upon starvation, WDR45 is involved in autophagosome assembly downstream of WIPI2, regulating the size of forming autophagosomes (PubMed:28561066). Together with WIPI1, promotes ATG2 (ATG2A or ATG2B)-mediated lipid transfer by enhancing ATG2-association with phosphatidylinositol 3-monophosphate (PI3P)-containing membranes (PubMed:31271352). Probably recruited to membranes through its PtdIns3P activity (PubMed:28561066).</text>
</comment>
<comment type="activity regulation">
    <text evidence="7">Activated upon amino-acid starvation.</text>
</comment>
<comment type="subunit">
    <text evidence="7 8 10">Interacts with WIPI1 (PubMed:28561066). Interacts with WIPI2 (PubMed:28561066). Interacts with ATG2A and ATG2B (PubMed:28561066, PubMed:28820312, PubMed:32483132). Interacts with ULK1 (PubMed:28561066). May interact with the PRKAA1, PRKAA2, PRKAB1 and PRKAG1 subunits of the AMPK kinase (PubMed:28561066). May interact with NUDC (PubMed:28561066).</text>
</comment>
<comment type="interaction">
    <interactant intactId="EBI-2682844">
        <id>Q9Y484</id>
    </interactant>
    <interactant intactId="EBI-2514077">
        <id>Q2TAZ0</id>
        <label>ATG2A</label>
    </interactant>
    <organismsDiffer>false</organismsDiffer>
    <experiments>5</experiments>
</comment>
<comment type="interaction">
    <interactant intactId="EBI-2682844">
        <id>Q9Y484</id>
    </interactant>
    <interactant intactId="EBI-2963262">
        <id>Q96BY7</id>
        <label>ATG2B</label>
    </interactant>
    <organismsDiffer>false</organismsDiffer>
    <experiments>4</experiments>
</comment>
<comment type="subcellular location">
    <subcellularLocation>
        <location evidence="3 7">Preautophagosomal structure</location>
    </subcellularLocation>
    <subcellularLocation>
        <location evidence="3">Cytoplasm</location>
    </subcellularLocation>
    <text evidence="3">Diffusely localized in the cytoplasm under nutrient-rich conditions. Localizes to autophagic structures during starvation-induced autophagy.</text>
</comment>
<comment type="alternative products">
    <event type="alternative splicing"/>
    <isoform>
        <id>Q9Y484-1</id>
        <name>1</name>
        <sequence type="displayed"/>
    </isoform>
    <isoform>
        <id>Q9Y484-2</id>
        <name>2</name>
        <sequence type="described" ref="VSP_016976"/>
    </isoform>
    <isoform>
        <id>Q9Y484-3</id>
        <name>3</name>
        <sequence type="described" ref="VSP_016975"/>
    </isoform>
</comment>
<comment type="tissue specificity">
    <text evidence="2">Ubiquitously expressed, with high expression in skeletal muscle and heart. Weakly expressed in liver and placenta. Expression is down-regulated in pancreatic and in kidney tumors.</text>
</comment>
<comment type="domain">
    <text evidence="1">The L/FRRG motif is required for recruitment to PtdIns3P.</text>
</comment>
<comment type="disease" evidence="4 5 6">
    <disease id="DI-03757">
        <name>Neurodegeneration with brain iron accumulation 5</name>
        <acronym>NBIA5</acronym>
        <description>A neurodegenerative disorder associated with iron accumulation in the brain, primarily in the basal ganglia. NBIA5 is characterized by global developmental delay in early childhood that is essentially static, with slow motor and cognitive gains until adolescence or early adulthood. In young adulthood, affected individuals develop progressive dystonia, parkinsonism, extrapyramidal signs, and dementia resulting in severe disability.</description>
        <dbReference type="MIM" id="300894"/>
    </disease>
    <text>The disease is caused by variants affecting the gene represented in this entry.</text>
</comment>
<comment type="similarity">
    <text evidence="12">Belongs to the WD repeat PROPPIN family.</text>
</comment>
<accession>Q9Y484</accession>
<accession>A6NGH5</accession>
<accession>B7WPI2</accession>
<accession>Q5MNZ5</accession>
<accession>Q6IBS7</accession>
<accession>Q6NT94</accession>
<accession>Q96H03</accession>
<dbReference type="EMBL" id="AY691428">
    <property type="protein sequence ID" value="AAV80764.1"/>
    <property type="molecule type" value="mRNA"/>
</dbReference>
<dbReference type="EMBL" id="AJ005897">
    <property type="protein sequence ID" value="CAA06754.1"/>
    <property type="molecule type" value="mRNA"/>
</dbReference>
<dbReference type="EMBL" id="CR456725">
    <property type="protein sequence ID" value="CAG33006.1"/>
    <property type="molecule type" value="mRNA"/>
</dbReference>
<dbReference type="EMBL" id="AF196779">
    <property type="status" value="NOT_ANNOTATED_CDS"/>
    <property type="molecule type" value="Genomic_DNA"/>
</dbReference>
<dbReference type="EMBL" id="CH471224">
    <property type="protein sequence ID" value="EAW50697.1"/>
    <property type="molecule type" value="Genomic_DNA"/>
</dbReference>
<dbReference type="EMBL" id="CH471224">
    <property type="protein sequence ID" value="EAW50702.1"/>
    <property type="molecule type" value="Genomic_DNA"/>
</dbReference>
<dbReference type="EMBL" id="BC000464">
    <property type="protein sequence ID" value="AAH00464.1"/>
    <property type="molecule type" value="mRNA"/>
</dbReference>
<dbReference type="EMBL" id="BC003037">
    <property type="protein sequence ID" value="AAH03037.1"/>
    <property type="molecule type" value="mRNA"/>
</dbReference>
<dbReference type="EMBL" id="BC009027">
    <property type="protein sequence ID" value="AAH09027.1"/>
    <property type="molecule type" value="mRNA"/>
</dbReference>
<dbReference type="EMBL" id="BC069206">
    <property type="protein sequence ID" value="AAH69206.1"/>
    <property type="molecule type" value="mRNA"/>
</dbReference>
<dbReference type="CCDS" id="CCDS14318.1">
    <molecule id="Q9Y484-3"/>
</dbReference>
<dbReference type="CCDS" id="CCDS35250.1">
    <molecule id="Q9Y484-1"/>
</dbReference>
<dbReference type="RefSeq" id="NP_001025067.1">
    <molecule id="Q9Y484-1"/>
    <property type="nucleotide sequence ID" value="NM_001029896.2"/>
</dbReference>
<dbReference type="RefSeq" id="NP_009006.2">
    <molecule id="Q9Y484-3"/>
    <property type="nucleotide sequence ID" value="NM_007075.3"/>
</dbReference>
<dbReference type="PDB" id="8KBX">
    <property type="method" value="EM"/>
    <property type="resolution" value="3.23 A"/>
    <property type="chains" value="A=1-360"/>
</dbReference>
<dbReference type="PDB" id="8KC3">
    <property type="method" value="EM"/>
    <property type="resolution" value="7.00 A"/>
    <property type="chains" value="D=1-360"/>
</dbReference>
<dbReference type="PDB" id="8Y1L">
    <property type="method" value="EM"/>
    <property type="resolution" value="7.05 A"/>
    <property type="chains" value="A=1-360"/>
</dbReference>
<dbReference type="PDBsum" id="8KBX"/>
<dbReference type="PDBsum" id="8KC3"/>
<dbReference type="PDBsum" id="8Y1L"/>
<dbReference type="EMDB" id="EMD-37086"/>
<dbReference type="EMDB" id="EMD-37091"/>
<dbReference type="EMDB" id="EMD-38839"/>
<dbReference type="SMR" id="Q9Y484"/>
<dbReference type="BioGRID" id="116323">
    <property type="interactions" value="51"/>
</dbReference>
<dbReference type="CORUM" id="Q9Y484"/>
<dbReference type="FunCoup" id="Q9Y484">
    <property type="interactions" value="883"/>
</dbReference>
<dbReference type="IntAct" id="Q9Y484">
    <property type="interactions" value="60"/>
</dbReference>
<dbReference type="STRING" id="9606.ENSP00000348848"/>
<dbReference type="TCDB" id="9.A.15.2.1">
    <property type="family name" value="the autophagy-related phagophore-formation transporter (apt) family"/>
</dbReference>
<dbReference type="GlyGen" id="Q9Y484">
    <property type="glycosylation" value="1 site, 1 O-linked glycan (1 site)"/>
</dbReference>
<dbReference type="iPTMnet" id="Q9Y484"/>
<dbReference type="PhosphoSitePlus" id="Q9Y484"/>
<dbReference type="SwissPalm" id="Q9Y484"/>
<dbReference type="BioMuta" id="WDR45"/>
<dbReference type="DMDM" id="74762056"/>
<dbReference type="jPOST" id="Q9Y484"/>
<dbReference type="MassIVE" id="Q9Y484"/>
<dbReference type="PaxDb" id="9606-ENSP00000348848"/>
<dbReference type="PeptideAtlas" id="Q9Y484"/>
<dbReference type="ProteomicsDB" id="86126">
    <molecule id="Q9Y484-1"/>
</dbReference>
<dbReference type="ProteomicsDB" id="86127">
    <molecule id="Q9Y484-2"/>
</dbReference>
<dbReference type="ProteomicsDB" id="86128">
    <molecule id="Q9Y484-3"/>
</dbReference>
<dbReference type="Pumba" id="Q9Y484"/>
<dbReference type="ABCD" id="Q9Y484">
    <property type="antibodies" value="2 sequenced antibodies"/>
</dbReference>
<dbReference type="Antibodypedia" id="34945">
    <property type="antibodies" value="170 antibodies from 21 providers"/>
</dbReference>
<dbReference type="DNASU" id="11152"/>
<dbReference type="Ensembl" id="ENST00000322995.13">
    <molecule id="Q9Y484-2"/>
    <property type="protein sequence ID" value="ENSP00000365543.5"/>
    <property type="gene ID" value="ENSG00000196998.19"/>
</dbReference>
<dbReference type="Ensembl" id="ENST00000356463.7">
    <molecule id="Q9Y484-3"/>
    <property type="protein sequence ID" value="ENSP00000348848.3"/>
    <property type="gene ID" value="ENSG00000196998.19"/>
</dbReference>
<dbReference type="Ensembl" id="ENST00000376368.7">
    <molecule id="Q9Y484-3"/>
    <property type="protein sequence ID" value="ENSP00000365546.2"/>
    <property type="gene ID" value="ENSG00000196998.19"/>
</dbReference>
<dbReference type="Ensembl" id="ENST00000376372.9">
    <molecule id="Q9Y484-1"/>
    <property type="protein sequence ID" value="ENSP00000365551.3"/>
    <property type="gene ID" value="ENSG00000196998.19"/>
</dbReference>
<dbReference type="Ensembl" id="ENST00000634944.1">
    <molecule id="Q9Y484-1"/>
    <property type="protein sequence ID" value="ENSP00000488972.1"/>
    <property type="gene ID" value="ENSG00000196998.19"/>
</dbReference>
<dbReference type="Ensembl" id="ENST00000710219.1">
    <molecule id="Q9Y484-1"/>
    <property type="protein sequence ID" value="ENSP00000518130.1"/>
    <property type="gene ID" value="ENSG00000292221.1"/>
</dbReference>
<dbReference type="Ensembl" id="ENST00000710220.1">
    <molecule id="Q9Y484-1"/>
    <property type="protein sequence ID" value="ENSP00000518131.1"/>
    <property type="gene ID" value="ENSG00000292221.1"/>
</dbReference>
<dbReference type="Ensembl" id="ENST00000710225.1">
    <molecule id="Q9Y484-2"/>
    <property type="protein sequence ID" value="ENSP00000518136.1"/>
    <property type="gene ID" value="ENSG00000292221.1"/>
</dbReference>
<dbReference type="Ensembl" id="ENST00000710226.1">
    <molecule id="Q9Y484-3"/>
    <property type="protein sequence ID" value="ENSP00000518137.1"/>
    <property type="gene ID" value="ENSG00000292221.1"/>
</dbReference>
<dbReference type="Ensembl" id="ENST00000710231.1">
    <molecule id="Q9Y484-3"/>
    <property type="protein sequence ID" value="ENSP00000518141.1"/>
    <property type="gene ID" value="ENSG00000292221.1"/>
</dbReference>
<dbReference type="GeneID" id="11152"/>
<dbReference type="KEGG" id="hsa:11152"/>
<dbReference type="MANE-Select" id="ENST00000376372.9">
    <property type="protein sequence ID" value="ENSP00000365551.3"/>
    <property type="RefSeq nucleotide sequence ID" value="NM_001029896.2"/>
    <property type="RefSeq protein sequence ID" value="NP_001025067.1"/>
</dbReference>
<dbReference type="UCSC" id="uc004dmk.2">
    <molecule id="Q9Y484-1"/>
    <property type="organism name" value="human"/>
</dbReference>
<dbReference type="AGR" id="HGNC:28912"/>
<dbReference type="CTD" id="11152"/>
<dbReference type="DisGeNET" id="11152"/>
<dbReference type="GeneCards" id="WDR45"/>
<dbReference type="GeneReviews" id="WDR45"/>
<dbReference type="HGNC" id="HGNC:28912">
    <property type="gene designation" value="WDR45"/>
</dbReference>
<dbReference type="HPA" id="ENSG00000196998">
    <property type="expression patterns" value="Low tissue specificity"/>
</dbReference>
<dbReference type="MalaCards" id="WDR45"/>
<dbReference type="MIM" id="300526">
    <property type="type" value="gene"/>
</dbReference>
<dbReference type="MIM" id="300894">
    <property type="type" value="phenotype"/>
</dbReference>
<dbReference type="neXtProt" id="NX_Q9Y484"/>
<dbReference type="OpenTargets" id="ENSG00000196998"/>
<dbReference type="Orphanet" id="329284">
    <property type="disease" value="Beta-propeller protein-associated neurodegeneration"/>
</dbReference>
<dbReference type="Orphanet" id="3451">
    <property type="disease" value="Infantile epileptic spasms syndrome"/>
</dbReference>
<dbReference type="PharmGKB" id="PA134927673"/>
<dbReference type="VEuPathDB" id="HostDB:ENSG00000196998"/>
<dbReference type="eggNOG" id="KOG2111">
    <property type="taxonomic scope" value="Eukaryota"/>
</dbReference>
<dbReference type="GeneTree" id="ENSGT00940000155657"/>
<dbReference type="InParanoid" id="Q9Y484"/>
<dbReference type="OMA" id="YAVCENG"/>
<dbReference type="OrthoDB" id="1667587at2759"/>
<dbReference type="PAN-GO" id="Q9Y484">
    <property type="GO annotations" value="9 GO annotations based on evolutionary models"/>
</dbReference>
<dbReference type="PhylomeDB" id="Q9Y484"/>
<dbReference type="TreeFam" id="TF314859"/>
<dbReference type="PathwayCommons" id="Q9Y484"/>
<dbReference type="Reactome" id="R-HSA-1632852">
    <property type="pathway name" value="Macroautophagy"/>
</dbReference>
<dbReference type="SignaLink" id="Q9Y484"/>
<dbReference type="SIGNOR" id="Q9Y484"/>
<dbReference type="BioGRID-ORCS" id="11152">
    <property type="hits" value="21 hits in 778 CRISPR screens"/>
</dbReference>
<dbReference type="ChiTaRS" id="WDR45">
    <property type="organism name" value="human"/>
</dbReference>
<dbReference type="GeneWiki" id="WDR45"/>
<dbReference type="GenomeRNAi" id="11152"/>
<dbReference type="Pharos" id="Q9Y484">
    <property type="development level" value="Tbio"/>
</dbReference>
<dbReference type="PRO" id="PR:Q9Y484"/>
<dbReference type="Proteomes" id="UP000005640">
    <property type="component" value="Chromosome X"/>
</dbReference>
<dbReference type="RNAct" id="Q9Y484">
    <property type="molecule type" value="protein"/>
</dbReference>
<dbReference type="Bgee" id="ENSG00000196998">
    <property type="expression patterns" value="Expressed in apex of heart and 209 other cell types or tissues"/>
</dbReference>
<dbReference type="ExpressionAtlas" id="Q9Y484">
    <property type="expression patterns" value="baseline and differential"/>
</dbReference>
<dbReference type="GO" id="GO:0005829">
    <property type="term" value="C:cytosol"/>
    <property type="evidence" value="ECO:0000318"/>
    <property type="project" value="GO_Central"/>
</dbReference>
<dbReference type="GO" id="GO:0000407">
    <property type="term" value="C:phagophore assembly site"/>
    <property type="evidence" value="ECO:0000314"/>
    <property type="project" value="UniProtKB"/>
</dbReference>
<dbReference type="GO" id="GO:0034045">
    <property type="term" value="C:phagophore assembly site membrane"/>
    <property type="evidence" value="ECO:0000318"/>
    <property type="project" value="GO_Central"/>
</dbReference>
<dbReference type="GO" id="GO:1901981">
    <property type="term" value="F:phosphatidylinositol phosphate binding"/>
    <property type="evidence" value="ECO:0000314"/>
    <property type="project" value="UniProtKB"/>
</dbReference>
<dbReference type="GO" id="GO:0080025">
    <property type="term" value="F:phosphatidylinositol-3,5-bisphosphate binding"/>
    <property type="evidence" value="ECO:0000318"/>
    <property type="project" value="GO_Central"/>
</dbReference>
<dbReference type="GO" id="GO:0032266">
    <property type="term" value="F:phosphatidylinositol-3-phosphate binding"/>
    <property type="evidence" value="ECO:0000314"/>
    <property type="project" value="UniProtKB"/>
</dbReference>
<dbReference type="GO" id="GO:0019901">
    <property type="term" value="F:protein kinase binding"/>
    <property type="evidence" value="ECO:0000353"/>
    <property type="project" value="UniProtKB"/>
</dbReference>
<dbReference type="GO" id="GO:0030674">
    <property type="term" value="F:protein-macromolecule adaptor activity"/>
    <property type="evidence" value="ECO:0000318"/>
    <property type="project" value="GO_Central"/>
</dbReference>
<dbReference type="GO" id="GO:0000045">
    <property type="term" value="P:autophagosome assembly"/>
    <property type="evidence" value="ECO:0000315"/>
    <property type="project" value="UniProtKB"/>
</dbReference>
<dbReference type="GO" id="GO:0006914">
    <property type="term" value="P:autophagy"/>
    <property type="evidence" value="ECO:0000315"/>
    <property type="project" value="UniProtKB"/>
</dbReference>
<dbReference type="GO" id="GO:0000422">
    <property type="term" value="P:autophagy of mitochondrion"/>
    <property type="evidence" value="ECO:0000318"/>
    <property type="project" value="GO_Central"/>
</dbReference>
<dbReference type="GO" id="GO:0009267">
    <property type="term" value="P:cellular response to starvation"/>
    <property type="evidence" value="ECO:0000314"/>
    <property type="project" value="UniProtKB"/>
</dbReference>
<dbReference type="GO" id="GO:0061723">
    <property type="term" value="P:glycophagy"/>
    <property type="evidence" value="ECO:0000318"/>
    <property type="project" value="GO_Central"/>
</dbReference>
<dbReference type="GO" id="GO:0044804">
    <property type="term" value="P:nucleophagy"/>
    <property type="evidence" value="ECO:0000318"/>
    <property type="project" value="GO_Central"/>
</dbReference>
<dbReference type="GO" id="GO:0000425">
    <property type="term" value="P:pexophagy"/>
    <property type="evidence" value="ECO:0000318"/>
    <property type="project" value="GO_Central"/>
</dbReference>
<dbReference type="GO" id="GO:2000786">
    <property type="term" value="P:positive regulation of autophagosome assembly"/>
    <property type="evidence" value="ECO:0000314"/>
    <property type="project" value="UniProtKB"/>
</dbReference>
<dbReference type="GO" id="GO:0034497">
    <property type="term" value="P:protein localization to phagophore assembly site"/>
    <property type="evidence" value="ECO:0000318"/>
    <property type="project" value="GO_Central"/>
</dbReference>
<dbReference type="FunFam" id="2.130.10.10:FF:000154">
    <property type="entry name" value="WD repeat domain phosphoinositide-interacting protein 4"/>
    <property type="match status" value="1"/>
</dbReference>
<dbReference type="Gene3D" id="2.130.10.10">
    <property type="entry name" value="YVTN repeat-like/Quinoprotein amine dehydrogenase"/>
    <property type="match status" value="1"/>
</dbReference>
<dbReference type="InterPro" id="IPR048720">
    <property type="entry name" value="PROPPIN"/>
</dbReference>
<dbReference type="InterPro" id="IPR015943">
    <property type="entry name" value="WD40/YVTN_repeat-like_dom_sf"/>
</dbReference>
<dbReference type="InterPro" id="IPR036322">
    <property type="entry name" value="WD40_repeat_dom_sf"/>
</dbReference>
<dbReference type="InterPro" id="IPR001680">
    <property type="entry name" value="WD40_rpt"/>
</dbReference>
<dbReference type="PANTHER" id="PTHR11227">
    <property type="entry name" value="WD-REPEAT PROTEIN INTERACTING WITH PHOSPHOINOSIDES WIPI -RELATED"/>
    <property type="match status" value="1"/>
</dbReference>
<dbReference type="Pfam" id="PF21032">
    <property type="entry name" value="PROPPIN"/>
    <property type="match status" value="1"/>
</dbReference>
<dbReference type="SMART" id="SM00320">
    <property type="entry name" value="WD40"/>
    <property type="match status" value="4"/>
</dbReference>
<dbReference type="SUPFAM" id="SSF50978">
    <property type="entry name" value="WD40 repeat-like"/>
    <property type="match status" value="1"/>
</dbReference>
<feature type="chain" id="PRO_0000051452" description="WD repeat domain phosphoinositide-interacting protein 4">
    <location>
        <begin position="1"/>
        <end position="360"/>
    </location>
</feature>
<feature type="repeat" description="WD 1">
    <location>
        <begin position="1"/>
        <end position="34"/>
    </location>
</feature>
<feature type="repeat" description="WD 2">
    <location>
        <begin position="40"/>
        <end position="84"/>
    </location>
</feature>
<feature type="repeat" description="WD 3">
    <location>
        <begin position="92"/>
        <end position="128"/>
    </location>
</feature>
<feature type="repeat" description="WD 4">
    <location>
        <begin position="133"/>
        <end position="174"/>
    </location>
</feature>
<feature type="repeat" description="WD 5">
    <location>
        <begin position="183"/>
        <end position="222"/>
    </location>
</feature>
<feature type="repeat" description="WD 6">
    <location>
        <begin position="227"/>
        <end position="266"/>
    </location>
</feature>
<feature type="repeat" description="WD 7">
    <location>
        <begin position="284"/>
        <end position="329"/>
    </location>
</feature>
<feature type="short sequence motif" description="L/FRRG motif" evidence="1">
    <location>
        <begin position="231"/>
        <end position="234"/>
    </location>
</feature>
<feature type="splice variant" id="VSP_016975" description="In isoform 3." evidence="11">
    <original>S</original>
    <variation>SA</variation>
    <location>
        <position position="78"/>
    </location>
</feature>
<feature type="splice variant" id="VSP_016976" description="In isoform 2." evidence="11">
    <original>K</original>
    <variation>KAAHPTPHLHTL</variation>
    <location>
        <position position="145"/>
    </location>
</feature>
<feature type="sequence variant" id="VAR_078645" description="In NBIA5." evidence="5">
    <location>
        <begin position="7"/>
        <end position="360"/>
    </location>
</feature>
<feature type="sequence variant" id="VAR_080430" description="In NBIA5; uncertain significance." evidence="6">
    <original>A</original>
    <variation>D</variation>
    <location>
        <position position="208"/>
    </location>
</feature>
<feature type="mutagenesis site" description="Decreased interaction with ATG2A. Loss of interaction with ATG2A; when associated with A-17." evidence="7">
    <original>N</original>
    <variation>A</variation>
    <location>
        <position position="15"/>
    </location>
</feature>
<feature type="mutagenesis site" description="No effect on interaction with ATG2A." evidence="7">
    <original>Q</original>
    <variation>A</variation>
    <location>
        <position position="16"/>
    </location>
</feature>
<feature type="mutagenesis site" description="Decreased interaction with ATG2A. Loss of interaction with ATG2A; when associated with A-15." evidence="7">
    <original>D</original>
    <variation>A</variation>
    <location>
        <position position="17"/>
    </location>
</feature>
<feature type="mutagenesis site" description="No effect on interaction with ATG2A." evidence="7">
    <original>E</original>
    <variation>A</variation>
    <location>
        <position position="55"/>
    </location>
</feature>
<feature type="mutagenesis site" description="No effect on interaction with ATG2A." evidence="7">
    <original>R</original>
    <variation>A</variation>
    <location>
        <position position="109"/>
    </location>
</feature>
<feature type="mutagenesis site" description="No effect on interaction with ATG2A." evidence="7">
    <original>R</original>
    <variation>A</variation>
    <location>
        <position position="111"/>
    </location>
</feature>
<feature type="mutagenesis site" description="No effect on interaction with ATG2A." evidence="7">
    <original>H</original>
    <variation>A</variation>
    <location>
        <position position="112"/>
    </location>
</feature>
<feature type="mutagenesis site" description="Loss of interaction with AMPK. No effect on interaction with ATG2A." evidence="7">
    <original>D</original>
    <variation>A</variation>
    <location>
        <position position="113"/>
    </location>
</feature>
<feature type="mutagenesis site" description="No effect on interaction with ATG2A." evidence="7">
    <original>K</original>
    <variation>A</variation>
    <location>
        <position position="114"/>
    </location>
</feature>
<feature type="mutagenesis site" description="No effect on interaction with ATG2A." evidence="7">
    <original>RR</original>
    <variation>AA</variation>
    <location>
        <begin position="232"/>
        <end position="233"/>
    </location>
</feature>
<feature type="sequence conflict" description="In Ref. 3; CAG33006." evidence="12" ref="3">
    <original>I</original>
    <variation>T</variation>
    <location>
        <position position="217"/>
    </location>
</feature>
<feature type="sequence conflict" description="In Ref. 1; AAV80764." evidence="12" ref="1">
    <original>FTV</original>
    <variation>YTA</variation>
    <location>
        <begin position="300"/>
        <end position="302"/>
    </location>
</feature>
<feature type="helix" evidence="13">
    <location>
        <begin position="6"/>
        <end position="8"/>
    </location>
</feature>
<feature type="strand" evidence="13">
    <location>
        <begin position="9"/>
        <end position="14"/>
    </location>
</feature>
<feature type="strand" evidence="13">
    <location>
        <begin position="18"/>
        <end position="25"/>
    </location>
</feature>
<feature type="strand" evidence="13">
    <location>
        <begin position="28"/>
        <end position="33"/>
    </location>
</feature>
<feature type="turn" evidence="13">
    <location>
        <begin position="34"/>
        <end position="37"/>
    </location>
</feature>
<feature type="strand" evidence="13">
    <location>
        <begin position="38"/>
        <end position="43"/>
    </location>
</feature>
<feature type="helix" evidence="13">
    <location>
        <begin position="45"/>
        <end position="48"/>
    </location>
</feature>
<feature type="strand" evidence="13">
    <location>
        <begin position="49"/>
        <end position="56"/>
    </location>
</feature>
<feature type="strand" evidence="13">
    <location>
        <begin position="60"/>
        <end position="74"/>
    </location>
</feature>
<feature type="strand" evidence="13">
    <location>
        <begin position="78"/>
        <end position="83"/>
    </location>
</feature>
<feature type="helix" evidence="13">
    <location>
        <begin position="91"/>
        <end position="94"/>
    </location>
</feature>
<feature type="strand" evidence="13">
    <location>
        <begin position="95"/>
        <end position="100"/>
    </location>
</feature>
<feature type="strand" evidence="13">
    <location>
        <begin position="105"/>
        <end position="111"/>
    </location>
</feature>
<feature type="strand" evidence="13">
    <location>
        <begin position="114"/>
        <end position="127"/>
    </location>
</feature>
<feature type="strand" evidence="13">
    <location>
        <begin position="129"/>
        <end position="131"/>
    </location>
</feature>
<feature type="strand" evidence="13">
    <location>
        <begin position="134"/>
        <end position="139"/>
    </location>
</feature>
<feature type="strand" evidence="13">
    <location>
        <begin position="158"/>
        <end position="162"/>
    </location>
</feature>
<feature type="strand" evidence="13">
    <location>
        <begin position="168"/>
        <end position="173"/>
    </location>
</feature>
<feature type="turn" evidence="13">
    <location>
        <begin position="174"/>
        <end position="176"/>
    </location>
</feature>
<feature type="strand" evidence="13">
    <location>
        <begin position="186"/>
        <end position="189"/>
    </location>
</feature>
<feature type="strand" evidence="13">
    <location>
        <begin position="195"/>
        <end position="200"/>
    </location>
</feature>
<feature type="strand" evidence="13">
    <location>
        <begin position="204"/>
        <end position="211"/>
    </location>
</feature>
<feature type="strand" evidence="13">
    <location>
        <begin position="215"/>
        <end position="221"/>
    </location>
</feature>
<feature type="turn" evidence="13">
    <location>
        <begin position="222"/>
        <end position="224"/>
    </location>
</feature>
<feature type="strand" evidence="13">
    <location>
        <begin position="227"/>
        <end position="232"/>
    </location>
</feature>
<feature type="strand" evidence="13">
    <location>
        <begin position="240"/>
        <end position="245"/>
    </location>
</feature>
<feature type="strand" evidence="13">
    <location>
        <begin position="249"/>
        <end position="256"/>
    </location>
</feature>
<feature type="turn" evidence="13">
    <location>
        <begin position="257"/>
        <end position="259"/>
    </location>
</feature>
<feature type="strand" evidence="13">
    <location>
        <begin position="260"/>
        <end position="268"/>
    </location>
</feature>
<feature type="helix" evidence="13">
    <location>
        <begin position="269"/>
        <end position="271"/>
    </location>
</feature>
<feature type="strand" evidence="13">
    <location>
        <begin position="272"/>
        <end position="274"/>
    </location>
</feature>
<feature type="helix" evidence="13">
    <location>
        <begin position="276"/>
        <end position="278"/>
    </location>
</feature>
<feature type="helix" evidence="13">
    <location>
        <begin position="288"/>
        <end position="291"/>
    </location>
</feature>
<feature type="strand" evidence="13">
    <location>
        <begin position="297"/>
        <end position="301"/>
    </location>
</feature>
<feature type="strand" evidence="13">
    <location>
        <begin position="308"/>
        <end position="312"/>
    </location>
</feature>
<feature type="strand" evidence="13">
    <location>
        <begin position="320"/>
        <end position="327"/>
    </location>
</feature>
<feature type="strand" evidence="13">
    <location>
        <begin position="330"/>
        <end position="337"/>
    </location>
</feature>
<feature type="strand" evidence="13">
    <location>
        <begin position="343"/>
        <end position="350"/>
    </location>
</feature>
<feature type="helix" evidence="13">
    <location>
        <begin position="351"/>
        <end position="353"/>
    </location>
</feature>
<reference key="1">
    <citation type="journal article" date="2004" name="Oncogene">
        <title>WIPI-1alpha (WIPI49), a member of the novel 7-bladed WIPI protein family, is aberrantly expressed in human cancer and is linked to starvation-induced autophagy.</title>
        <authorList>
            <person name="Proikas-Cezanne T."/>
            <person name="Waddell S."/>
            <person name="Gaugel A."/>
            <person name="Frickey T."/>
            <person name="Lupas A."/>
            <person name="Nordheim A."/>
        </authorList>
    </citation>
    <scope>NUCLEOTIDE SEQUENCE [MRNA] (ISOFORM 1)</scope>
    <scope>TISSUE SPECIFICITY</scope>
    <source>
        <tissue>Testis</tissue>
    </source>
</reference>
<reference key="2">
    <citation type="submission" date="1998-04" db="EMBL/GenBank/DDBJ databases">
        <title>Transcription map in Xp11.23.</title>
        <authorList>
            <person name="Strom T.M."/>
            <person name="Nyakatura G."/>
            <person name="Hellebrand H."/>
            <person name="Drescher B."/>
            <person name="Rosenthal A."/>
            <person name="Meindl A."/>
        </authorList>
    </citation>
    <scope>NUCLEOTIDE SEQUENCE [LARGE SCALE MRNA] (ISOFORM 1)</scope>
</reference>
<reference key="3">
    <citation type="submission" date="2004-06" db="EMBL/GenBank/DDBJ databases">
        <title>Cloning of human full open reading frames in Gateway(TM) system entry vector (pDONR201).</title>
        <authorList>
            <person name="Ebert L."/>
            <person name="Schick M."/>
            <person name="Neubert P."/>
            <person name="Schatten R."/>
            <person name="Henze S."/>
            <person name="Korn B."/>
        </authorList>
    </citation>
    <scope>NUCLEOTIDE SEQUENCE [LARGE SCALE MRNA] (ISOFORM 1)</scope>
</reference>
<reference key="4">
    <citation type="journal article" date="2005" name="Nature">
        <title>The DNA sequence of the human X chromosome.</title>
        <authorList>
            <person name="Ross M.T."/>
            <person name="Grafham D.V."/>
            <person name="Coffey A.J."/>
            <person name="Scherer S."/>
            <person name="McLay K."/>
            <person name="Muzny D."/>
            <person name="Platzer M."/>
            <person name="Howell G.R."/>
            <person name="Burrows C."/>
            <person name="Bird C.P."/>
            <person name="Frankish A."/>
            <person name="Lovell F.L."/>
            <person name="Howe K.L."/>
            <person name="Ashurst J.L."/>
            <person name="Fulton R.S."/>
            <person name="Sudbrak R."/>
            <person name="Wen G."/>
            <person name="Jones M.C."/>
            <person name="Hurles M.E."/>
            <person name="Andrews T.D."/>
            <person name="Scott C.E."/>
            <person name="Searle S."/>
            <person name="Ramser J."/>
            <person name="Whittaker A."/>
            <person name="Deadman R."/>
            <person name="Carter N.P."/>
            <person name="Hunt S.E."/>
            <person name="Chen R."/>
            <person name="Cree A."/>
            <person name="Gunaratne P."/>
            <person name="Havlak P."/>
            <person name="Hodgson A."/>
            <person name="Metzker M.L."/>
            <person name="Richards S."/>
            <person name="Scott G."/>
            <person name="Steffen D."/>
            <person name="Sodergren E."/>
            <person name="Wheeler D.A."/>
            <person name="Worley K.C."/>
            <person name="Ainscough R."/>
            <person name="Ambrose K.D."/>
            <person name="Ansari-Lari M.A."/>
            <person name="Aradhya S."/>
            <person name="Ashwell R.I."/>
            <person name="Babbage A.K."/>
            <person name="Bagguley C.L."/>
            <person name="Ballabio A."/>
            <person name="Banerjee R."/>
            <person name="Barker G.E."/>
            <person name="Barlow K.F."/>
            <person name="Barrett I.P."/>
            <person name="Bates K.N."/>
            <person name="Beare D.M."/>
            <person name="Beasley H."/>
            <person name="Beasley O."/>
            <person name="Beck A."/>
            <person name="Bethel G."/>
            <person name="Blechschmidt K."/>
            <person name="Brady N."/>
            <person name="Bray-Allen S."/>
            <person name="Bridgeman A.M."/>
            <person name="Brown A.J."/>
            <person name="Brown M.J."/>
            <person name="Bonnin D."/>
            <person name="Bruford E.A."/>
            <person name="Buhay C."/>
            <person name="Burch P."/>
            <person name="Burford D."/>
            <person name="Burgess J."/>
            <person name="Burrill W."/>
            <person name="Burton J."/>
            <person name="Bye J.M."/>
            <person name="Carder C."/>
            <person name="Carrel L."/>
            <person name="Chako J."/>
            <person name="Chapman J.C."/>
            <person name="Chavez D."/>
            <person name="Chen E."/>
            <person name="Chen G."/>
            <person name="Chen Y."/>
            <person name="Chen Z."/>
            <person name="Chinault C."/>
            <person name="Ciccodicola A."/>
            <person name="Clark S.Y."/>
            <person name="Clarke G."/>
            <person name="Clee C.M."/>
            <person name="Clegg S."/>
            <person name="Clerc-Blankenburg K."/>
            <person name="Clifford K."/>
            <person name="Cobley V."/>
            <person name="Cole C.G."/>
            <person name="Conquer J.S."/>
            <person name="Corby N."/>
            <person name="Connor R.E."/>
            <person name="David R."/>
            <person name="Davies J."/>
            <person name="Davis C."/>
            <person name="Davis J."/>
            <person name="Delgado O."/>
            <person name="Deshazo D."/>
            <person name="Dhami P."/>
            <person name="Ding Y."/>
            <person name="Dinh H."/>
            <person name="Dodsworth S."/>
            <person name="Draper H."/>
            <person name="Dugan-Rocha S."/>
            <person name="Dunham A."/>
            <person name="Dunn M."/>
            <person name="Durbin K.J."/>
            <person name="Dutta I."/>
            <person name="Eades T."/>
            <person name="Ellwood M."/>
            <person name="Emery-Cohen A."/>
            <person name="Errington H."/>
            <person name="Evans K.L."/>
            <person name="Faulkner L."/>
            <person name="Francis F."/>
            <person name="Frankland J."/>
            <person name="Fraser A.E."/>
            <person name="Galgoczy P."/>
            <person name="Gilbert J."/>
            <person name="Gill R."/>
            <person name="Gloeckner G."/>
            <person name="Gregory S.G."/>
            <person name="Gribble S."/>
            <person name="Griffiths C."/>
            <person name="Grocock R."/>
            <person name="Gu Y."/>
            <person name="Gwilliam R."/>
            <person name="Hamilton C."/>
            <person name="Hart E.A."/>
            <person name="Hawes A."/>
            <person name="Heath P.D."/>
            <person name="Heitmann K."/>
            <person name="Hennig S."/>
            <person name="Hernandez J."/>
            <person name="Hinzmann B."/>
            <person name="Ho S."/>
            <person name="Hoffs M."/>
            <person name="Howden P.J."/>
            <person name="Huckle E.J."/>
            <person name="Hume J."/>
            <person name="Hunt P.J."/>
            <person name="Hunt A.R."/>
            <person name="Isherwood J."/>
            <person name="Jacob L."/>
            <person name="Johnson D."/>
            <person name="Jones S."/>
            <person name="de Jong P.J."/>
            <person name="Joseph S.S."/>
            <person name="Keenan S."/>
            <person name="Kelly S."/>
            <person name="Kershaw J.K."/>
            <person name="Khan Z."/>
            <person name="Kioschis P."/>
            <person name="Klages S."/>
            <person name="Knights A.J."/>
            <person name="Kosiura A."/>
            <person name="Kovar-Smith C."/>
            <person name="Laird G.K."/>
            <person name="Langford C."/>
            <person name="Lawlor S."/>
            <person name="Leversha M."/>
            <person name="Lewis L."/>
            <person name="Liu W."/>
            <person name="Lloyd C."/>
            <person name="Lloyd D.M."/>
            <person name="Loulseged H."/>
            <person name="Loveland J.E."/>
            <person name="Lovell J.D."/>
            <person name="Lozado R."/>
            <person name="Lu J."/>
            <person name="Lyne R."/>
            <person name="Ma J."/>
            <person name="Maheshwari M."/>
            <person name="Matthews L.H."/>
            <person name="McDowall J."/>
            <person name="McLaren S."/>
            <person name="McMurray A."/>
            <person name="Meidl P."/>
            <person name="Meitinger T."/>
            <person name="Milne S."/>
            <person name="Miner G."/>
            <person name="Mistry S.L."/>
            <person name="Morgan M."/>
            <person name="Morris S."/>
            <person name="Mueller I."/>
            <person name="Mullikin J.C."/>
            <person name="Nguyen N."/>
            <person name="Nordsiek G."/>
            <person name="Nyakatura G."/>
            <person name="O'dell C.N."/>
            <person name="Okwuonu G."/>
            <person name="Palmer S."/>
            <person name="Pandian R."/>
            <person name="Parker D."/>
            <person name="Parrish J."/>
            <person name="Pasternak S."/>
            <person name="Patel D."/>
            <person name="Pearce A.V."/>
            <person name="Pearson D.M."/>
            <person name="Pelan S.E."/>
            <person name="Perez L."/>
            <person name="Porter K.M."/>
            <person name="Ramsey Y."/>
            <person name="Reichwald K."/>
            <person name="Rhodes S."/>
            <person name="Ridler K.A."/>
            <person name="Schlessinger D."/>
            <person name="Schueler M.G."/>
            <person name="Sehra H.K."/>
            <person name="Shaw-Smith C."/>
            <person name="Shen H."/>
            <person name="Sheridan E.M."/>
            <person name="Shownkeen R."/>
            <person name="Skuce C.D."/>
            <person name="Smith M.L."/>
            <person name="Sotheran E.C."/>
            <person name="Steingruber H.E."/>
            <person name="Steward C.A."/>
            <person name="Storey R."/>
            <person name="Swann R.M."/>
            <person name="Swarbreck D."/>
            <person name="Tabor P.E."/>
            <person name="Taudien S."/>
            <person name="Taylor T."/>
            <person name="Teague B."/>
            <person name="Thomas K."/>
            <person name="Thorpe A."/>
            <person name="Timms K."/>
            <person name="Tracey A."/>
            <person name="Trevanion S."/>
            <person name="Tromans A.C."/>
            <person name="d'Urso M."/>
            <person name="Verduzco D."/>
            <person name="Villasana D."/>
            <person name="Waldron L."/>
            <person name="Wall M."/>
            <person name="Wang Q."/>
            <person name="Warren J."/>
            <person name="Warry G.L."/>
            <person name="Wei X."/>
            <person name="West A."/>
            <person name="Whitehead S.L."/>
            <person name="Whiteley M.N."/>
            <person name="Wilkinson J.E."/>
            <person name="Willey D.L."/>
            <person name="Williams G."/>
            <person name="Williams L."/>
            <person name="Williamson A."/>
            <person name="Williamson H."/>
            <person name="Wilming L."/>
            <person name="Woodmansey R.L."/>
            <person name="Wray P.W."/>
            <person name="Yen J."/>
            <person name="Zhang J."/>
            <person name="Zhou J."/>
            <person name="Zoghbi H."/>
            <person name="Zorilla S."/>
            <person name="Buck D."/>
            <person name="Reinhardt R."/>
            <person name="Poustka A."/>
            <person name="Rosenthal A."/>
            <person name="Lehrach H."/>
            <person name="Meindl A."/>
            <person name="Minx P.J."/>
            <person name="Hillier L.W."/>
            <person name="Willard H.F."/>
            <person name="Wilson R.K."/>
            <person name="Waterston R.H."/>
            <person name="Rice C.M."/>
            <person name="Vaudin M."/>
            <person name="Coulson A."/>
            <person name="Nelson D.L."/>
            <person name="Weinstock G."/>
            <person name="Sulston J.E."/>
            <person name="Durbin R.M."/>
            <person name="Hubbard T."/>
            <person name="Gibbs R.A."/>
            <person name="Beck S."/>
            <person name="Rogers J."/>
            <person name="Bentley D.R."/>
        </authorList>
    </citation>
    <scope>NUCLEOTIDE SEQUENCE [LARGE SCALE GENOMIC DNA]</scope>
</reference>
<reference key="5">
    <citation type="submission" date="2005-07" db="EMBL/GenBank/DDBJ databases">
        <authorList>
            <person name="Mural R.J."/>
            <person name="Istrail S."/>
            <person name="Sutton G.G."/>
            <person name="Florea L."/>
            <person name="Halpern A.L."/>
            <person name="Mobarry C.M."/>
            <person name="Lippert R."/>
            <person name="Walenz B."/>
            <person name="Shatkay H."/>
            <person name="Dew I."/>
            <person name="Miller J.R."/>
            <person name="Flanigan M.J."/>
            <person name="Edwards N.J."/>
            <person name="Bolanos R."/>
            <person name="Fasulo D."/>
            <person name="Halldorsson B.V."/>
            <person name="Hannenhalli S."/>
            <person name="Turner R."/>
            <person name="Yooseph S."/>
            <person name="Lu F."/>
            <person name="Nusskern D.R."/>
            <person name="Shue B.C."/>
            <person name="Zheng X.H."/>
            <person name="Zhong F."/>
            <person name="Delcher A.L."/>
            <person name="Huson D.H."/>
            <person name="Kravitz S.A."/>
            <person name="Mouchard L."/>
            <person name="Reinert K."/>
            <person name="Remington K.A."/>
            <person name="Clark A.G."/>
            <person name="Waterman M.S."/>
            <person name="Eichler E.E."/>
            <person name="Adams M.D."/>
            <person name="Hunkapiller M.W."/>
            <person name="Myers E.W."/>
            <person name="Venter J.C."/>
        </authorList>
    </citation>
    <scope>NUCLEOTIDE SEQUENCE [LARGE SCALE GENOMIC DNA]</scope>
</reference>
<reference key="6">
    <citation type="journal article" date="2004" name="Genome Res.">
        <title>The status, quality, and expansion of the NIH full-length cDNA project: the Mammalian Gene Collection (MGC).</title>
        <authorList>
            <consortium name="The MGC Project Team"/>
        </authorList>
    </citation>
    <scope>NUCLEOTIDE SEQUENCE [LARGE SCALE MRNA] (ISOFORMS 1 AND 3)</scope>
    <scope>NUCLEOTIDE SEQUENCE [LARGE SCALE MRNA] OF 69-360 (ISOFORM 2)</scope>
    <source>
        <tissue>Brain</tissue>
        <tissue>Lung</tissue>
    </source>
</reference>
<reference key="7">
    <citation type="journal article" date="2011" name="Dev. Cell">
        <title>The WD40 repeat PtdIns(3)P-binding protein EPG-6 regulates progression of omegasomes to autophagosomes.</title>
        <authorList>
            <person name="Lu Q."/>
            <person name="Yang P."/>
            <person name="Huang X."/>
            <person name="Hu W."/>
            <person name="Guo B."/>
            <person name="Wu F."/>
            <person name="Lin L."/>
            <person name="Kovacs A.L."/>
            <person name="Yu L."/>
            <person name="Zhang H."/>
        </authorList>
    </citation>
    <scope>SUBCELLULAR LOCATION</scope>
</reference>
<reference key="8">
    <citation type="journal article" date="2013" name="Nat. Genet.">
        <title>De novo mutations in the autophagy gene WDR45 cause static encephalopathy of childhood with neurodegeneration in adulthood.</title>
        <authorList>
            <person name="Saitsu H."/>
            <person name="Nishimura T."/>
            <person name="Muramatsu K."/>
            <person name="Kodera H."/>
            <person name="Kumada S."/>
            <person name="Sugai K."/>
            <person name="Kasai-Yoshida E."/>
            <person name="Sawaura N."/>
            <person name="Nishida H."/>
            <person name="Hoshino A."/>
            <person name="Ryujin F."/>
            <person name="Yoshioka S."/>
            <person name="Nishiyama K."/>
            <person name="Kondo Y."/>
            <person name="Tsurusaki Y."/>
            <person name="Nakashima M."/>
            <person name="Miyake N."/>
            <person name="Arakawa H."/>
            <person name="Kato M."/>
            <person name="Mizushima N."/>
            <person name="Matsumoto N."/>
        </authorList>
    </citation>
    <scope>INVOLVEMENT IN NBIA5</scope>
    <scope>FUNCTION</scope>
</reference>
<reference key="9">
    <citation type="journal article" date="2017" name="Autophagy">
        <title>Architecture of the ATG2B-WDR45 complex and an aromatic Y/HF motif crucial for complex formation.</title>
        <authorList>
            <person name="Zheng J.X."/>
            <person name="Li Y."/>
            <person name="Ding Y.H."/>
            <person name="Liu J.J."/>
            <person name="Zhang M.J."/>
            <person name="Dong M.Q."/>
            <person name="Wang H.W."/>
            <person name="Yu L."/>
        </authorList>
    </citation>
    <scope>INTERACTION WITH ATG2A AND ATG2B</scope>
</reference>
<reference key="10">
    <citation type="journal article" date="2017" name="Nat. Commun.">
        <title>WIPI3 and WIPI4 beta-propellers are scaffolds for LKB1-AMPK-TSC signalling circuits in the control of autophagy.</title>
        <authorList>
            <person name="Bakula D."/>
            <person name="Mueller A.J."/>
            <person name="Zuleger T."/>
            <person name="Takacs Z."/>
            <person name="Franz-Wachtel M."/>
            <person name="Thost A.K."/>
            <person name="Brigger D."/>
            <person name="Tschan M.P."/>
            <person name="Frickey T."/>
            <person name="Robenek H."/>
            <person name="Macek B."/>
            <person name="Proikas-Cezanne T."/>
        </authorList>
    </citation>
    <scope>FUNCTION</scope>
    <scope>PHOSPHOINOSITIDES-BINDING</scope>
    <scope>ACTIVITY REGULATION</scope>
    <scope>INTERACTION WITH AMPK; ATG2A; NUDC; ULK1; WIPI1 AND WIPI2</scope>
    <scope>SUBCELLULAR LOCATION</scope>
    <scope>MUTAGENESIS OF ASN-15; GLN-16; ASP-17; GLU-55; ARG-109; ARG-111; HIS-112; ASP-113; LYS-114 AND 232-ARG-ARG-233</scope>
</reference>
<reference key="11">
    <citation type="journal article" date="2019" name="Elife">
        <title>The autophagic membrane tether ATG2A transfers lipids between membranes.</title>
        <authorList>
            <person name="Maeda S."/>
            <person name="Otomo C."/>
            <person name="Otomo T."/>
        </authorList>
    </citation>
    <scope>FUNCTION</scope>
</reference>
<reference key="12">
    <citation type="journal article" date="2020" name="Nat. Commun.">
        <title>Multi-site-mediated entwining of the linear WIR-motif around WIPI beta-propellers for autophagy.</title>
        <authorList>
            <person name="Ren J."/>
            <person name="Liang R."/>
            <person name="Wang W."/>
            <person name="Zhang D."/>
            <person name="Yu L."/>
            <person name="Feng W."/>
        </authorList>
    </citation>
    <scope>INTERACTION WITH ATG2A</scope>
</reference>
<reference key="13">
    <citation type="journal article" date="2014" name="PLoS Genet.">
        <title>De novo mutations in moderate or severe intellectual disability.</title>
        <authorList>
            <person name="Hamdan F.F."/>
            <person name="Srour M."/>
            <person name="Capo-Chichi J.M."/>
            <person name="Daoud H."/>
            <person name="Nassif C."/>
            <person name="Patry L."/>
            <person name="Massicotte C."/>
            <person name="Ambalavanan A."/>
            <person name="Spiegelman D."/>
            <person name="Diallo O."/>
            <person name="Henrion E."/>
            <person name="Dionne-Laporte A."/>
            <person name="Fougerat A."/>
            <person name="Pshezhetsky A.V."/>
            <person name="Venkateswaran S."/>
            <person name="Rouleau G.A."/>
            <person name="Michaud J.L."/>
        </authorList>
    </citation>
    <scope>VARIANT NBIA5 7-ARG--PHE-360 DEL</scope>
</reference>
<reference key="14">
    <citation type="journal article" date="2015" name="J. Neurol. Sci.">
        <title>Analysis of the C19orf12 and WDR45 genes in patients with neurodegeneration with brain iron accumulation.</title>
        <authorList>
            <person name="Tschentscher A."/>
            <person name="Dekomien G."/>
            <person name="Ross S."/>
            <person name="Cremer K."/>
            <person name="Kukuk G.M."/>
            <person name="Epplen J.T."/>
            <person name="Hoffjan S."/>
        </authorList>
    </citation>
    <scope>VARIANT NBIA5 ASP-208</scope>
</reference>